<dbReference type="EMBL" id="AF076481">
    <property type="protein sequence ID" value="AAC31820.1"/>
    <property type="molecule type" value="mRNA"/>
</dbReference>
<dbReference type="SMR" id="O76537"/>
<dbReference type="FunCoup" id="O76537">
    <property type="interactions" value="53"/>
</dbReference>
<dbReference type="InParanoid" id="O76537"/>
<dbReference type="Proteomes" id="UP000322000">
    <property type="component" value="Unplaced"/>
</dbReference>
<dbReference type="GO" id="GO:0008745">
    <property type="term" value="F:N-acetylmuramoyl-L-alanine amidase activity"/>
    <property type="evidence" value="ECO:0007669"/>
    <property type="project" value="InterPro"/>
</dbReference>
<dbReference type="GO" id="GO:0042834">
    <property type="term" value="F:peptidoglycan binding"/>
    <property type="evidence" value="ECO:0007669"/>
    <property type="project" value="InterPro"/>
</dbReference>
<dbReference type="GO" id="GO:0008270">
    <property type="term" value="F:zinc ion binding"/>
    <property type="evidence" value="ECO:0007669"/>
    <property type="project" value="InterPro"/>
</dbReference>
<dbReference type="GO" id="GO:0045087">
    <property type="term" value="P:innate immune response"/>
    <property type="evidence" value="ECO:0007669"/>
    <property type="project" value="UniProtKB-KW"/>
</dbReference>
<dbReference type="GO" id="GO:0009253">
    <property type="term" value="P:peptidoglycan catabolic process"/>
    <property type="evidence" value="ECO:0007669"/>
    <property type="project" value="InterPro"/>
</dbReference>
<dbReference type="CDD" id="cd06583">
    <property type="entry name" value="PGRP"/>
    <property type="match status" value="1"/>
</dbReference>
<dbReference type="FunFam" id="3.40.80.10:FF:000001">
    <property type="entry name" value="Peptidoglycan recognition protein 1"/>
    <property type="match status" value="1"/>
</dbReference>
<dbReference type="Gene3D" id="3.40.80.10">
    <property type="entry name" value="Peptidoglycan recognition protein-like"/>
    <property type="match status" value="1"/>
</dbReference>
<dbReference type="InterPro" id="IPR036505">
    <property type="entry name" value="Amidase/PGRP_sf"/>
</dbReference>
<dbReference type="InterPro" id="IPR002502">
    <property type="entry name" value="Amidase_domain"/>
</dbReference>
<dbReference type="InterPro" id="IPR017331">
    <property type="entry name" value="Peptidoglycan_recognition"/>
</dbReference>
<dbReference type="InterPro" id="IPR015510">
    <property type="entry name" value="PGRP"/>
</dbReference>
<dbReference type="InterPro" id="IPR006619">
    <property type="entry name" value="PGRP_domain_met/bac"/>
</dbReference>
<dbReference type="PANTHER" id="PTHR11022">
    <property type="entry name" value="PEPTIDOGLYCAN RECOGNITION PROTEIN"/>
    <property type="match status" value="1"/>
</dbReference>
<dbReference type="PANTHER" id="PTHR11022:SF74">
    <property type="entry name" value="PEPTIDOGLYCAN-RECOGNITION PROTEIN SA"/>
    <property type="match status" value="1"/>
</dbReference>
<dbReference type="Pfam" id="PF01510">
    <property type="entry name" value="Amidase_2"/>
    <property type="match status" value="1"/>
</dbReference>
<dbReference type="PIRSF" id="PIRSF037945">
    <property type="entry name" value="PGRPs"/>
    <property type="match status" value="1"/>
</dbReference>
<dbReference type="SMART" id="SM00644">
    <property type="entry name" value="Ami_2"/>
    <property type="match status" value="1"/>
</dbReference>
<dbReference type="SMART" id="SM00701">
    <property type="entry name" value="PGRP"/>
    <property type="match status" value="1"/>
</dbReference>
<dbReference type="SUPFAM" id="SSF55846">
    <property type="entry name" value="N-acetylmuramoyl-L-alanine amidase-like"/>
    <property type="match status" value="1"/>
</dbReference>
<name>PGRP_TRINI</name>
<organism>
    <name type="scientific">Trichoplusia ni</name>
    <name type="common">Cabbage looper</name>
    <dbReference type="NCBI Taxonomy" id="7111"/>
    <lineage>
        <taxon>Eukaryota</taxon>
        <taxon>Metazoa</taxon>
        <taxon>Ecdysozoa</taxon>
        <taxon>Arthropoda</taxon>
        <taxon>Hexapoda</taxon>
        <taxon>Insecta</taxon>
        <taxon>Pterygota</taxon>
        <taxon>Neoptera</taxon>
        <taxon>Endopterygota</taxon>
        <taxon>Lepidoptera</taxon>
        <taxon>Glossata</taxon>
        <taxon>Ditrysia</taxon>
        <taxon>Noctuoidea</taxon>
        <taxon>Noctuidae</taxon>
        <taxon>Plusiinae</taxon>
        <taxon>Trichoplusia</taxon>
    </lineage>
</organism>
<feature type="signal peptide" evidence="2">
    <location>
        <begin position="1"/>
        <end position="16"/>
    </location>
</feature>
<feature type="chain" id="PRO_0000023919" description="Peptidoglycan recognition protein">
    <location>
        <begin position="17"/>
        <end position="182"/>
    </location>
</feature>
<feature type="domain" description="N-acetylmuramoyl-L-alanine amidase" evidence="1">
    <location>
        <begin position="39"/>
        <end position="166"/>
    </location>
</feature>
<feature type="disulfide bond" evidence="1">
    <location>
        <begin position="18"/>
        <end position="140"/>
    </location>
</feature>
<feature type="disulfide bond" evidence="1">
    <location>
        <begin position="54"/>
        <end position="60"/>
    </location>
</feature>
<accession>O76537</accession>
<keyword id="KW-0903">Direct protein sequencing</keyword>
<keyword id="KW-1015">Disulfide bond</keyword>
<keyword id="KW-0391">Immunity</keyword>
<keyword id="KW-0399">Innate immunity</keyword>
<keyword id="KW-1185">Reference proteome</keyword>
<keyword id="KW-0732">Signal</keyword>
<gene>
    <name type="primary">PGRP</name>
</gene>
<protein>
    <recommendedName>
        <fullName>Peptidoglycan recognition protein</fullName>
    </recommendedName>
</protein>
<sequence>MEILFVLFFVFVTVSGDCGVVTKDEWDGLTPIHVEYLARPVELVIIQHTVTSTCNTDAACAQIVRNIQSYHMDNLNYWDIGSSFIIGGNGKVYEGAGWLHVGAHTYGYNRKSIGITFIGNYNNDKPTQKSLDALRALLRCGVERGHLTANYHIVGHRQLISTESPGRKLYNEIRRWDHFLDN</sequence>
<reference key="1">
    <citation type="journal article" date="1998" name="Proc. Natl. Acad. Sci. U.S.A.">
        <title>A peptidoglycan recognition protein in innate immunity conserved from insects to humans.</title>
        <authorList>
            <person name="Kang D."/>
            <person name="Liu G."/>
            <person name="Lundstroem A."/>
            <person name="Gelius E."/>
            <person name="Steiner H."/>
        </authorList>
    </citation>
    <scope>NUCLEOTIDE SEQUENCE [MRNA]</scope>
    <scope>PROTEIN SEQUENCE OF 17-21</scope>
    <scope>TISSUE SPECIFICITY</scope>
    <scope>INDUCTION</scope>
    <source>
        <tissue>Larva</tissue>
    </source>
</reference>
<evidence type="ECO:0000255" key="1"/>
<evidence type="ECO:0000269" key="2">
    <source>
    </source>
</evidence>
<evidence type="ECO:0000305" key="3"/>
<comment type="function">
    <text>Binds specifically to peptidoglycan and triggers the propenoloxidase cascade which is an important insect innate immune defense mechanism.</text>
</comment>
<comment type="subunit">
    <text evidence="3">Monomer.</text>
</comment>
<comment type="tissue specificity">
    <text evidence="2">Strongly expressed in fat body with weak expression observed in hemocyte. No expression detected in gut.</text>
</comment>
<comment type="induction">
    <text evidence="2">By bacterial challenge.</text>
</comment>
<comment type="similarity">
    <text evidence="3">Belongs to the N-acetylmuramoyl-L-alanine amidase 2 family.</text>
</comment>
<proteinExistence type="evidence at protein level"/>